<evidence type="ECO:0000255" key="1">
    <source>
        <dbReference type="HAMAP-Rule" id="MF_01590"/>
    </source>
</evidence>
<keyword id="KW-0808">Transferase</keyword>
<keyword id="KW-0819">tRNA processing</keyword>
<reference key="1">
    <citation type="journal article" date="2007" name="Science">
        <title>The Calyptogena magnifica chemoautotrophic symbiont genome.</title>
        <authorList>
            <person name="Newton I.L.G."/>
            <person name="Woyke T."/>
            <person name="Auchtung T.A."/>
            <person name="Dilly G.F."/>
            <person name="Dutton R.J."/>
            <person name="Fisher M.C."/>
            <person name="Fontanez K.M."/>
            <person name="Lau E."/>
            <person name="Stewart F.J."/>
            <person name="Richardson P.M."/>
            <person name="Barry K.W."/>
            <person name="Saunders E."/>
            <person name="Detter J.C."/>
            <person name="Wu D."/>
            <person name="Eisen J.A."/>
            <person name="Cavanaugh C.M."/>
        </authorList>
    </citation>
    <scope>NUCLEOTIDE SEQUENCE [LARGE SCALE GENOMIC DNA]</scope>
</reference>
<sequence length="318" mass="36706">MLSDFYKYATSTQLDLICTQLINLSTHVFNTNNGNIPKWEQAIKQIKTQNTGSLDFITPYLNISAHHINNFTLEKSLKQLIPWRKGPYQIGDLQLDSEWRGDMKWHRLIPHIKPLKDKVVLDVGSGNGYFTYLMAISGAKIALGIEPFLLFNYQFQAIRTLINNLPNVFVLPLSLDKIPKKPLFDTVFSMGVLYHQKDYELHLNQLKDVMKPSGELILETLIIDLEKVKKIIPKGRYAKMRNVYCLPSKNTLRTWLEDAEFKNIKLLDVTKTTSKEQRATHWIGNNTQSLKNFLDPNNRDLTIEGFPAPKRAIFICQK</sequence>
<protein>
    <recommendedName>
        <fullName evidence="1">tRNA U34 carboxymethyltransferase</fullName>
        <ecNumber evidence="1">2.5.1.-</ecNumber>
    </recommendedName>
</protein>
<name>CMOB_RUTMC</name>
<proteinExistence type="inferred from homology"/>
<feature type="chain" id="PRO_0000313957" description="tRNA U34 carboxymethyltransferase">
    <location>
        <begin position="1"/>
        <end position="318"/>
    </location>
</feature>
<feature type="binding site" evidence="1">
    <location>
        <position position="85"/>
    </location>
    <ligand>
        <name>carboxy-S-adenosyl-L-methionine</name>
        <dbReference type="ChEBI" id="CHEBI:134278"/>
    </ligand>
</feature>
<feature type="binding site" evidence="1">
    <location>
        <position position="99"/>
    </location>
    <ligand>
        <name>carboxy-S-adenosyl-L-methionine</name>
        <dbReference type="ChEBI" id="CHEBI:134278"/>
    </ligand>
</feature>
<feature type="binding site" evidence="1">
    <location>
        <position position="104"/>
    </location>
    <ligand>
        <name>carboxy-S-adenosyl-L-methionine</name>
        <dbReference type="ChEBI" id="CHEBI:134278"/>
    </ligand>
</feature>
<feature type="binding site" evidence="1">
    <location>
        <position position="124"/>
    </location>
    <ligand>
        <name>carboxy-S-adenosyl-L-methionine</name>
        <dbReference type="ChEBI" id="CHEBI:134278"/>
    </ligand>
</feature>
<feature type="binding site" evidence="1">
    <location>
        <begin position="175"/>
        <end position="176"/>
    </location>
    <ligand>
        <name>carboxy-S-adenosyl-L-methionine</name>
        <dbReference type="ChEBI" id="CHEBI:134278"/>
    </ligand>
</feature>
<feature type="binding site" evidence="1">
    <location>
        <position position="190"/>
    </location>
    <ligand>
        <name>carboxy-S-adenosyl-L-methionine</name>
        <dbReference type="ChEBI" id="CHEBI:134278"/>
    </ligand>
</feature>
<feature type="binding site" evidence="1">
    <location>
        <position position="194"/>
    </location>
    <ligand>
        <name>carboxy-S-adenosyl-L-methionine</name>
        <dbReference type="ChEBI" id="CHEBI:134278"/>
    </ligand>
</feature>
<feature type="binding site" evidence="1">
    <location>
        <position position="311"/>
    </location>
    <ligand>
        <name>carboxy-S-adenosyl-L-methionine</name>
        <dbReference type="ChEBI" id="CHEBI:134278"/>
    </ligand>
</feature>
<dbReference type="EC" id="2.5.1.-" evidence="1"/>
<dbReference type="EMBL" id="CP000488">
    <property type="protein sequence ID" value="ABL02041.1"/>
    <property type="molecule type" value="Genomic_DNA"/>
</dbReference>
<dbReference type="RefSeq" id="WP_011737666.1">
    <property type="nucleotide sequence ID" value="NC_008610.1"/>
</dbReference>
<dbReference type="SMR" id="A1AVT4"/>
<dbReference type="STRING" id="413404.Rmag_0259"/>
<dbReference type="KEGG" id="rma:Rmag_0259"/>
<dbReference type="eggNOG" id="COG0500">
    <property type="taxonomic scope" value="Bacteria"/>
</dbReference>
<dbReference type="HOGENOM" id="CLU_052665_0_0_6"/>
<dbReference type="OrthoDB" id="9773188at2"/>
<dbReference type="Proteomes" id="UP000002587">
    <property type="component" value="Chromosome"/>
</dbReference>
<dbReference type="GO" id="GO:0016765">
    <property type="term" value="F:transferase activity, transferring alkyl or aryl (other than methyl) groups"/>
    <property type="evidence" value="ECO:0007669"/>
    <property type="project" value="UniProtKB-UniRule"/>
</dbReference>
<dbReference type="GO" id="GO:0002098">
    <property type="term" value="P:tRNA wobble uridine modification"/>
    <property type="evidence" value="ECO:0007669"/>
    <property type="project" value="InterPro"/>
</dbReference>
<dbReference type="CDD" id="cd02440">
    <property type="entry name" value="AdoMet_MTases"/>
    <property type="match status" value="1"/>
</dbReference>
<dbReference type="Gene3D" id="3.40.50.150">
    <property type="entry name" value="Vaccinia Virus protein VP39"/>
    <property type="match status" value="1"/>
</dbReference>
<dbReference type="HAMAP" id="MF_01590">
    <property type="entry name" value="tRNA_carboxymethyltr_CmoB"/>
    <property type="match status" value="1"/>
</dbReference>
<dbReference type="InterPro" id="IPR010017">
    <property type="entry name" value="CmoB"/>
</dbReference>
<dbReference type="InterPro" id="IPR027555">
    <property type="entry name" value="Mo5U34_MeTrfas-like"/>
</dbReference>
<dbReference type="InterPro" id="IPR029063">
    <property type="entry name" value="SAM-dependent_MTases_sf"/>
</dbReference>
<dbReference type="NCBIfam" id="NF011650">
    <property type="entry name" value="PRK15068.1"/>
    <property type="match status" value="1"/>
</dbReference>
<dbReference type="NCBIfam" id="TIGR00452">
    <property type="entry name" value="tRNA 5-methoxyuridine(34)/uridine 5-oxyacetic acid(34) synthase CmoB"/>
    <property type="match status" value="1"/>
</dbReference>
<dbReference type="Pfam" id="PF08003">
    <property type="entry name" value="Methyltransf_9"/>
    <property type="match status" value="1"/>
</dbReference>
<dbReference type="SUPFAM" id="SSF53335">
    <property type="entry name" value="S-adenosyl-L-methionine-dependent methyltransferases"/>
    <property type="match status" value="1"/>
</dbReference>
<comment type="function">
    <text evidence="1">Catalyzes carboxymethyl transfer from carboxy-S-adenosyl-L-methionine (Cx-SAM) to 5-hydroxyuridine (ho5U) to form 5-carboxymethoxyuridine (cmo5U) at position 34 in tRNAs.</text>
</comment>
<comment type="catalytic activity">
    <reaction evidence="1">
        <text>carboxy-S-adenosyl-L-methionine + 5-hydroxyuridine(34) in tRNA = 5-carboxymethoxyuridine(34) in tRNA + S-adenosyl-L-homocysteine + H(+)</text>
        <dbReference type="Rhea" id="RHEA:52848"/>
        <dbReference type="Rhea" id="RHEA-COMP:13381"/>
        <dbReference type="Rhea" id="RHEA-COMP:13383"/>
        <dbReference type="ChEBI" id="CHEBI:15378"/>
        <dbReference type="ChEBI" id="CHEBI:57856"/>
        <dbReference type="ChEBI" id="CHEBI:134278"/>
        <dbReference type="ChEBI" id="CHEBI:136877"/>
        <dbReference type="ChEBI" id="CHEBI:136879"/>
    </reaction>
</comment>
<comment type="subunit">
    <text evidence="1">Homotetramer.</text>
</comment>
<comment type="similarity">
    <text evidence="1">Belongs to the class I-like SAM-binding methyltransferase superfamily. CmoB family.</text>
</comment>
<organism>
    <name type="scientific">Ruthia magnifica subsp. Calyptogena magnifica</name>
    <dbReference type="NCBI Taxonomy" id="413404"/>
    <lineage>
        <taxon>Bacteria</taxon>
        <taxon>Pseudomonadati</taxon>
        <taxon>Pseudomonadota</taxon>
        <taxon>Gammaproteobacteria</taxon>
        <taxon>Candidatus Pseudothioglobaceae</taxon>
        <taxon>Candidatus Ruthturnera</taxon>
    </lineage>
</organism>
<gene>
    <name evidence="1" type="primary">cmoB</name>
    <name type="ordered locus">Rmag_0259</name>
</gene>
<accession>A1AVT4</accession>